<organism>
    <name type="scientific">Caenorhabditis elegans</name>
    <dbReference type="NCBI Taxonomy" id="6239"/>
    <lineage>
        <taxon>Eukaryota</taxon>
        <taxon>Metazoa</taxon>
        <taxon>Ecdysozoa</taxon>
        <taxon>Nematoda</taxon>
        <taxon>Chromadorea</taxon>
        <taxon>Rhabditida</taxon>
        <taxon>Rhabditina</taxon>
        <taxon>Rhabditomorpha</taxon>
        <taxon>Rhabditoidea</taxon>
        <taxon>Rhabditidae</taxon>
        <taxon>Peloderinae</taxon>
        <taxon>Caenorhabditis</taxon>
    </lineage>
</organism>
<evidence type="ECO:0000255" key="1"/>
<evidence type="ECO:0000256" key="2">
    <source>
        <dbReference type="SAM" id="MobiDB-lite"/>
    </source>
</evidence>
<evidence type="ECO:0000305" key="3"/>
<keyword id="KW-0472">Membrane</keyword>
<keyword id="KW-1185">Reference proteome</keyword>
<keyword id="KW-0812">Transmembrane</keyword>
<keyword id="KW-1133">Transmembrane helix</keyword>
<sequence length="230" mass="25905">MDYIQMLFTASILSLGYLVFICGKKKKPKPTASTESVSPLNEPKPPPQSAVPQKPAAPAAEEKAPVDPKDPKSKDVDEAKKPDPANSKKSNKSKKPEKGSKKSKKSEKSKKKKTEEKVMSEDKPERPDKLTEEEKPDAKEKKEIEKEKTKEKEKTKEKEKTQEKEKSKDETVPKQHAPSLKRQEGDKNPEITNPIVTPETDEFPTIDEDAEKTKKTEKKDVKTEGTLKKN</sequence>
<protein>
    <recommendedName>
        <fullName>Uncharacterized protein AH6.3</fullName>
    </recommendedName>
</protein>
<feature type="chain" id="PRO_0000065041" description="Uncharacterized protein AH6.3">
    <location>
        <begin position="1"/>
        <end position="230"/>
    </location>
</feature>
<feature type="transmembrane region" description="Helical" evidence="1">
    <location>
        <begin position="7"/>
        <end position="23"/>
    </location>
</feature>
<feature type="region of interest" description="Disordered" evidence="2">
    <location>
        <begin position="27"/>
        <end position="230"/>
    </location>
</feature>
<feature type="compositionally biased region" description="Low complexity" evidence="2">
    <location>
        <begin position="50"/>
        <end position="59"/>
    </location>
</feature>
<feature type="compositionally biased region" description="Basic and acidic residues" evidence="2">
    <location>
        <begin position="60"/>
        <end position="83"/>
    </location>
</feature>
<feature type="compositionally biased region" description="Basic residues" evidence="2">
    <location>
        <begin position="101"/>
        <end position="112"/>
    </location>
</feature>
<feature type="compositionally biased region" description="Basic and acidic residues" evidence="2">
    <location>
        <begin position="113"/>
        <end position="173"/>
    </location>
</feature>
<feature type="compositionally biased region" description="Acidic residues" evidence="2">
    <location>
        <begin position="199"/>
        <end position="210"/>
    </location>
</feature>
<feature type="compositionally biased region" description="Basic and acidic residues" evidence="2">
    <location>
        <begin position="211"/>
        <end position="230"/>
    </location>
</feature>
<name>YP23_CAEEL</name>
<comment type="subcellular location">
    <subcellularLocation>
        <location evidence="3">Membrane</location>
        <topology evidence="3">Single-pass membrane protein</topology>
    </subcellularLocation>
</comment>
<proteinExistence type="predicted"/>
<reference key="1">
    <citation type="journal article" date="1998" name="Science">
        <title>Genome sequence of the nematode C. elegans: a platform for investigating biology.</title>
        <authorList>
            <consortium name="The C. elegans sequencing consortium"/>
        </authorList>
    </citation>
    <scope>NUCLEOTIDE SEQUENCE [LARGE SCALE GENOMIC DNA]</scope>
    <source>
        <strain>Bristol N2</strain>
    </source>
</reference>
<gene>
    <name type="ORF">AH6.3</name>
</gene>
<dbReference type="EMBL" id="Z48009">
    <property type="protein sequence ID" value="CAA88077.1"/>
    <property type="molecule type" value="Genomic_DNA"/>
</dbReference>
<dbReference type="PIR" id="T18613">
    <property type="entry name" value="T18613"/>
</dbReference>
<dbReference type="RefSeq" id="NP_496041.1">
    <property type="nucleotide sequence ID" value="NM_063640.3"/>
</dbReference>
<dbReference type="SMR" id="Q09202"/>
<dbReference type="STRING" id="6239.AH6.3.1"/>
<dbReference type="PaxDb" id="6239-AH6.3"/>
<dbReference type="EnsemblMetazoa" id="AH6.3.1">
    <property type="protein sequence ID" value="AH6.3.1"/>
    <property type="gene ID" value="WBGene00007081"/>
</dbReference>
<dbReference type="GeneID" id="181808"/>
<dbReference type="KEGG" id="cel:CELE_AH6.3"/>
<dbReference type="UCSC" id="AH6.3">
    <property type="organism name" value="c. elegans"/>
</dbReference>
<dbReference type="AGR" id="WB:WBGene00007081"/>
<dbReference type="CTD" id="181808"/>
<dbReference type="WormBase" id="AH6.3">
    <property type="protein sequence ID" value="CE01457"/>
    <property type="gene ID" value="WBGene00007081"/>
</dbReference>
<dbReference type="eggNOG" id="ENOG502RT60">
    <property type="taxonomic scope" value="Eukaryota"/>
</dbReference>
<dbReference type="GeneTree" id="ENSGT00970000197927"/>
<dbReference type="HOGENOM" id="CLU_1205708_0_0_1"/>
<dbReference type="InParanoid" id="Q09202"/>
<dbReference type="OMA" id="ALFTCGK"/>
<dbReference type="PRO" id="PR:Q09202"/>
<dbReference type="Proteomes" id="UP000001940">
    <property type="component" value="Chromosome II"/>
</dbReference>
<dbReference type="Bgee" id="WBGene00007081">
    <property type="expression patterns" value="Expressed in larva and 1 other cell type or tissue"/>
</dbReference>
<dbReference type="GO" id="GO:0016020">
    <property type="term" value="C:membrane"/>
    <property type="evidence" value="ECO:0007669"/>
    <property type="project" value="UniProtKB-SubCell"/>
</dbReference>
<accession>Q09202</accession>